<gene>
    <name evidence="1" type="primary">tusD</name>
    <name type="ordered locus">SPA3317</name>
</gene>
<accession>Q5PN20</accession>
<comment type="function">
    <text evidence="1">Part of a sulfur-relay system required for 2-thiolation of 5-methylaminomethyl-2-thiouridine (mnm(5)s(2)U) at tRNA wobble positions. Accepts sulfur from TusA and transfers it in turn to TusE.</text>
</comment>
<comment type="subunit">
    <text evidence="1">Heterohexamer, formed by a dimer of trimers. The hexameric TusBCD complex contains 2 copies each of TusB, TusC and TusD. The TusBCD complex interacts with TusE.</text>
</comment>
<comment type="subcellular location">
    <subcellularLocation>
        <location evidence="1">Cytoplasm</location>
    </subcellularLocation>
</comment>
<comment type="similarity">
    <text evidence="1">Belongs to the DsrE/TusD family.</text>
</comment>
<dbReference type="EC" id="2.8.1.-" evidence="1"/>
<dbReference type="EMBL" id="CP000026">
    <property type="protein sequence ID" value="AAV79133.1"/>
    <property type="molecule type" value="Genomic_DNA"/>
</dbReference>
<dbReference type="RefSeq" id="WP_001268010.1">
    <property type="nucleotide sequence ID" value="NC_006511.1"/>
</dbReference>
<dbReference type="SMR" id="Q5PN20"/>
<dbReference type="KEGG" id="spt:SPA3317"/>
<dbReference type="HOGENOM" id="CLU_132095_0_0_6"/>
<dbReference type="Proteomes" id="UP000008185">
    <property type="component" value="Chromosome"/>
</dbReference>
<dbReference type="GO" id="GO:1990228">
    <property type="term" value="C:sulfurtransferase complex"/>
    <property type="evidence" value="ECO:0007669"/>
    <property type="project" value="TreeGrafter"/>
</dbReference>
<dbReference type="GO" id="GO:0097163">
    <property type="term" value="F:sulfur carrier activity"/>
    <property type="evidence" value="ECO:0007669"/>
    <property type="project" value="TreeGrafter"/>
</dbReference>
<dbReference type="GO" id="GO:0016783">
    <property type="term" value="F:sulfurtransferase activity"/>
    <property type="evidence" value="ECO:0007669"/>
    <property type="project" value="UniProtKB-UniRule"/>
</dbReference>
<dbReference type="GO" id="GO:0002143">
    <property type="term" value="P:tRNA wobble position uridine thiolation"/>
    <property type="evidence" value="ECO:0007669"/>
    <property type="project" value="TreeGrafter"/>
</dbReference>
<dbReference type="FunFam" id="3.40.1260.10:FF:000001">
    <property type="entry name" value="Sulfurtransferase TusD"/>
    <property type="match status" value="1"/>
</dbReference>
<dbReference type="Gene3D" id="3.40.1260.10">
    <property type="entry name" value="DsrEFH-like"/>
    <property type="match status" value="1"/>
</dbReference>
<dbReference type="HAMAP" id="MF_00390">
    <property type="entry name" value="Thiourid_synth_D"/>
    <property type="match status" value="1"/>
</dbReference>
<dbReference type="InterPro" id="IPR027396">
    <property type="entry name" value="DsrEFH-like"/>
</dbReference>
<dbReference type="InterPro" id="IPR003787">
    <property type="entry name" value="Sulphur_relay_DsrE/F-like"/>
</dbReference>
<dbReference type="InterPro" id="IPR017463">
    <property type="entry name" value="Sulphur_relay_TusD/DsrE"/>
</dbReference>
<dbReference type="NCBIfam" id="NF001237">
    <property type="entry name" value="PRK00207.1"/>
    <property type="match status" value="1"/>
</dbReference>
<dbReference type="NCBIfam" id="TIGR03012">
    <property type="entry name" value="sulf_tusD_dsrE"/>
    <property type="match status" value="1"/>
</dbReference>
<dbReference type="PANTHER" id="PTHR34874">
    <property type="entry name" value="PROTEIN YCHN"/>
    <property type="match status" value="1"/>
</dbReference>
<dbReference type="PANTHER" id="PTHR34874:SF3">
    <property type="entry name" value="SULFURTRANSFERASE TUSD"/>
    <property type="match status" value="1"/>
</dbReference>
<dbReference type="Pfam" id="PF02635">
    <property type="entry name" value="DsrE"/>
    <property type="match status" value="1"/>
</dbReference>
<dbReference type="SUPFAM" id="SSF75169">
    <property type="entry name" value="DsrEFH-like"/>
    <property type="match status" value="1"/>
</dbReference>
<sequence>MRYAIMVTGPAYGTQQASSALQFAHALLNEGHELASVFFYREGVYNANLLTSPASDEYDLVRAWQKLNTQHGVALNICVAAALRRGIIDETEAGRLALPSANLQPGFTLSGLGALAEASLTCDRVVQF</sequence>
<proteinExistence type="inferred from homology"/>
<keyword id="KW-0963">Cytoplasm</keyword>
<keyword id="KW-0808">Transferase</keyword>
<keyword id="KW-0819">tRNA processing</keyword>
<feature type="chain" id="PRO_0000234534" description="Sulfurtransferase TusD">
    <location>
        <begin position="1"/>
        <end position="128"/>
    </location>
</feature>
<feature type="active site" description="Cysteine persulfide intermediate" evidence="1">
    <location>
        <position position="78"/>
    </location>
</feature>
<organism>
    <name type="scientific">Salmonella paratyphi A (strain ATCC 9150 / SARB42)</name>
    <dbReference type="NCBI Taxonomy" id="295319"/>
    <lineage>
        <taxon>Bacteria</taxon>
        <taxon>Pseudomonadati</taxon>
        <taxon>Pseudomonadota</taxon>
        <taxon>Gammaproteobacteria</taxon>
        <taxon>Enterobacterales</taxon>
        <taxon>Enterobacteriaceae</taxon>
        <taxon>Salmonella</taxon>
    </lineage>
</organism>
<protein>
    <recommendedName>
        <fullName evidence="1">Sulfurtransferase TusD</fullName>
        <ecNumber evidence="1">2.8.1.-</ecNumber>
    </recommendedName>
    <alternativeName>
        <fullName evidence="1">tRNA 2-thiouridine synthesizing protein D</fullName>
    </alternativeName>
</protein>
<reference key="1">
    <citation type="journal article" date="2004" name="Nat. Genet.">
        <title>Comparison of genome degradation in Paratyphi A and Typhi, human-restricted serovars of Salmonella enterica that cause typhoid.</title>
        <authorList>
            <person name="McClelland M."/>
            <person name="Sanderson K.E."/>
            <person name="Clifton S.W."/>
            <person name="Latreille P."/>
            <person name="Porwollik S."/>
            <person name="Sabo A."/>
            <person name="Meyer R."/>
            <person name="Bieri T."/>
            <person name="Ozersky P."/>
            <person name="McLellan M."/>
            <person name="Harkins C.R."/>
            <person name="Wang C."/>
            <person name="Nguyen C."/>
            <person name="Berghoff A."/>
            <person name="Elliott G."/>
            <person name="Kohlberg S."/>
            <person name="Strong C."/>
            <person name="Du F."/>
            <person name="Carter J."/>
            <person name="Kremizki C."/>
            <person name="Layman D."/>
            <person name="Leonard S."/>
            <person name="Sun H."/>
            <person name="Fulton L."/>
            <person name="Nash W."/>
            <person name="Miner T."/>
            <person name="Minx P."/>
            <person name="Delehaunty K."/>
            <person name="Fronick C."/>
            <person name="Magrini V."/>
            <person name="Nhan M."/>
            <person name="Warren W."/>
            <person name="Florea L."/>
            <person name="Spieth J."/>
            <person name="Wilson R.K."/>
        </authorList>
    </citation>
    <scope>NUCLEOTIDE SEQUENCE [LARGE SCALE GENOMIC DNA]</scope>
    <source>
        <strain>ATCC 9150 / SARB42</strain>
    </source>
</reference>
<name>TUSD_SALPA</name>
<evidence type="ECO:0000255" key="1">
    <source>
        <dbReference type="HAMAP-Rule" id="MF_00390"/>
    </source>
</evidence>